<proteinExistence type="inferred from homology"/>
<evidence type="ECO:0000250" key="1"/>
<evidence type="ECO:0000250" key="2">
    <source>
        <dbReference type="UniProtKB" id="P00157"/>
    </source>
</evidence>
<evidence type="ECO:0000255" key="3">
    <source>
        <dbReference type="PROSITE-ProRule" id="PRU00967"/>
    </source>
</evidence>
<evidence type="ECO:0000255" key="4">
    <source>
        <dbReference type="PROSITE-ProRule" id="PRU00968"/>
    </source>
</evidence>
<evidence type="ECO:0000305" key="5"/>
<dbReference type="EMBL" id="X56289">
    <property type="protein sequence ID" value="CAA39736.1"/>
    <property type="molecule type" value="Genomic_DNA"/>
</dbReference>
<dbReference type="EMBL" id="D84201">
    <property type="protein sequence ID" value="BAA12251.1"/>
    <property type="molecule type" value="Genomic_DNA"/>
</dbReference>
<dbReference type="PIR" id="S17407">
    <property type="entry name" value="S17407"/>
</dbReference>
<dbReference type="SMR" id="P24953"/>
<dbReference type="STRING" id="9925.ENSCHIP00000000013"/>
<dbReference type="Proteomes" id="UP000291000">
    <property type="component" value="Unassembled WGS sequence"/>
</dbReference>
<dbReference type="Proteomes" id="UP000694566">
    <property type="component" value="Unplaced"/>
</dbReference>
<dbReference type="GO" id="GO:0005743">
    <property type="term" value="C:mitochondrial inner membrane"/>
    <property type="evidence" value="ECO:0007669"/>
    <property type="project" value="UniProtKB-SubCell"/>
</dbReference>
<dbReference type="GO" id="GO:0045275">
    <property type="term" value="C:respiratory chain complex III"/>
    <property type="evidence" value="ECO:0007669"/>
    <property type="project" value="InterPro"/>
</dbReference>
<dbReference type="GO" id="GO:0046872">
    <property type="term" value="F:metal ion binding"/>
    <property type="evidence" value="ECO:0007669"/>
    <property type="project" value="UniProtKB-KW"/>
</dbReference>
<dbReference type="GO" id="GO:0008121">
    <property type="term" value="F:ubiquinol-cytochrome-c reductase activity"/>
    <property type="evidence" value="ECO:0007669"/>
    <property type="project" value="InterPro"/>
</dbReference>
<dbReference type="GO" id="GO:0006122">
    <property type="term" value="P:mitochondrial electron transport, ubiquinol to cytochrome c"/>
    <property type="evidence" value="ECO:0007669"/>
    <property type="project" value="TreeGrafter"/>
</dbReference>
<dbReference type="CDD" id="cd00290">
    <property type="entry name" value="cytochrome_b_C"/>
    <property type="match status" value="1"/>
</dbReference>
<dbReference type="CDD" id="cd00284">
    <property type="entry name" value="Cytochrome_b_N"/>
    <property type="match status" value="1"/>
</dbReference>
<dbReference type="FunFam" id="1.20.810.10:FF:000002">
    <property type="entry name" value="Cytochrome b"/>
    <property type="match status" value="1"/>
</dbReference>
<dbReference type="Gene3D" id="1.20.810.10">
    <property type="entry name" value="Cytochrome Bc1 Complex, Chain C"/>
    <property type="match status" value="1"/>
</dbReference>
<dbReference type="InterPro" id="IPR005798">
    <property type="entry name" value="Cyt_b/b6_C"/>
</dbReference>
<dbReference type="InterPro" id="IPR036150">
    <property type="entry name" value="Cyt_b/b6_C_sf"/>
</dbReference>
<dbReference type="InterPro" id="IPR005797">
    <property type="entry name" value="Cyt_b/b6_N"/>
</dbReference>
<dbReference type="InterPro" id="IPR027387">
    <property type="entry name" value="Cytb/b6-like_sf"/>
</dbReference>
<dbReference type="InterPro" id="IPR030689">
    <property type="entry name" value="Cytochrome_b"/>
</dbReference>
<dbReference type="InterPro" id="IPR048260">
    <property type="entry name" value="Cytochrome_b_C_euk/bac"/>
</dbReference>
<dbReference type="InterPro" id="IPR048259">
    <property type="entry name" value="Cytochrome_b_N_euk/bac"/>
</dbReference>
<dbReference type="InterPro" id="IPR016174">
    <property type="entry name" value="Di-haem_cyt_TM"/>
</dbReference>
<dbReference type="PANTHER" id="PTHR19271">
    <property type="entry name" value="CYTOCHROME B"/>
    <property type="match status" value="1"/>
</dbReference>
<dbReference type="PANTHER" id="PTHR19271:SF16">
    <property type="entry name" value="CYTOCHROME B"/>
    <property type="match status" value="1"/>
</dbReference>
<dbReference type="Pfam" id="PF00032">
    <property type="entry name" value="Cytochrom_B_C"/>
    <property type="match status" value="1"/>
</dbReference>
<dbReference type="Pfam" id="PF00033">
    <property type="entry name" value="Cytochrome_B"/>
    <property type="match status" value="1"/>
</dbReference>
<dbReference type="PIRSF" id="PIRSF038885">
    <property type="entry name" value="COB"/>
    <property type="match status" value="1"/>
</dbReference>
<dbReference type="SUPFAM" id="SSF81648">
    <property type="entry name" value="a domain/subunit of cytochrome bc1 complex (Ubiquinol-cytochrome c reductase)"/>
    <property type="match status" value="1"/>
</dbReference>
<dbReference type="SUPFAM" id="SSF81342">
    <property type="entry name" value="Transmembrane di-heme cytochromes"/>
    <property type="match status" value="1"/>
</dbReference>
<dbReference type="PROSITE" id="PS51003">
    <property type="entry name" value="CYTB_CTER"/>
    <property type="match status" value="1"/>
</dbReference>
<dbReference type="PROSITE" id="PS51002">
    <property type="entry name" value="CYTB_NTER"/>
    <property type="match status" value="1"/>
</dbReference>
<sequence length="379" mass="42871">MTNIRKTHPLMKIVNNAFIDLPTPSNISSWWNFGSLLGICLILQILTGLFLAMHYTSDTMTAFSSVTHICRDVNYGWIIRYMHANGASMFFICLFMHIGRGLYYGSYTFLETWNIGVILLLATMATAFMGYVLPWGQMSFWGATVITNLLSAIPYIGTNLVEWIWGGFSVDKATLTRFFAFHFILPFIITALAMVHLLFLHETGSNNPTGIPSDTDKIPFHPYYTIKDILGAMLLILVLMLLVLFTPDLLGDPDNYTPANPLNTPPHIKPEWYFLFAYAILRSIPNKLGGVLALVLSILILVLVPFLHTSKQRSMMFRPISQCMFWILVADLLTLTWIGGQPVEHPYIIIGQLASIMYFLIILVMMPVASTIENNLLKW</sequence>
<protein>
    <recommendedName>
        <fullName>Cytochrome b</fullName>
    </recommendedName>
    <alternativeName>
        <fullName>Complex III subunit 3</fullName>
    </alternativeName>
    <alternativeName>
        <fullName>Complex III subunit III</fullName>
    </alternativeName>
    <alternativeName>
        <fullName>Cytochrome b-c1 complex subunit 3</fullName>
    </alternativeName>
    <alternativeName>
        <fullName>Ubiquinol-cytochrome-c reductase complex cytochrome b subunit</fullName>
    </alternativeName>
</protein>
<gene>
    <name type="primary">MT-CYB</name>
    <name type="synonym">COB</name>
    <name type="synonym">CYTB</name>
    <name type="synonym">MTCYB</name>
</gene>
<name>CYB_CAPHI</name>
<geneLocation type="mitochondrion"/>
<keyword id="KW-0249">Electron transport</keyword>
<keyword id="KW-0349">Heme</keyword>
<keyword id="KW-0408">Iron</keyword>
<keyword id="KW-0472">Membrane</keyword>
<keyword id="KW-0479">Metal-binding</keyword>
<keyword id="KW-0496">Mitochondrion</keyword>
<keyword id="KW-0999">Mitochondrion inner membrane</keyword>
<keyword id="KW-1185">Reference proteome</keyword>
<keyword id="KW-0679">Respiratory chain</keyword>
<keyword id="KW-0812">Transmembrane</keyword>
<keyword id="KW-1133">Transmembrane helix</keyword>
<keyword id="KW-0813">Transport</keyword>
<keyword id="KW-0830">Ubiquinone</keyword>
<feature type="chain" id="PRO_0000060725" description="Cytochrome b">
    <location>
        <begin position="1"/>
        <end position="379"/>
    </location>
</feature>
<feature type="transmembrane region" description="Helical" evidence="2">
    <location>
        <begin position="33"/>
        <end position="53"/>
    </location>
</feature>
<feature type="transmembrane region" description="Helical" evidence="2">
    <location>
        <begin position="77"/>
        <end position="98"/>
    </location>
</feature>
<feature type="transmembrane region" description="Helical" evidence="2">
    <location>
        <begin position="113"/>
        <end position="133"/>
    </location>
</feature>
<feature type="transmembrane region" description="Helical" evidence="2">
    <location>
        <begin position="178"/>
        <end position="198"/>
    </location>
</feature>
<feature type="transmembrane region" description="Helical" evidence="2">
    <location>
        <begin position="226"/>
        <end position="246"/>
    </location>
</feature>
<feature type="transmembrane region" description="Helical" evidence="2">
    <location>
        <begin position="288"/>
        <end position="308"/>
    </location>
</feature>
<feature type="transmembrane region" description="Helical" evidence="2">
    <location>
        <begin position="320"/>
        <end position="340"/>
    </location>
</feature>
<feature type="transmembrane region" description="Helical" evidence="2">
    <location>
        <begin position="347"/>
        <end position="367"/>
    </location>
</feature>
<feature type="binding site" description="axial binding residue" evidence="2">
    <location>
        <position position="83"/>
    </location>
    <ligand>
        <name>heme b</name>
        <dbReference type="ChEBI" id="CHEBI:60344"/>
        <label>b562</label>
    </ligand>
    <ligandPart>
        <name>Fe</name>
        <dbReference type="ChEBI" id="CHEBI:18248"/>
    </ligandPart>
</feature>
<feature type="binding site" description="axial binding residue" evidence="2">
    <location>
        <position position="97"/>
    </location>
    <ligand>
        <name>heme b</name>
        <dbReference type="ChEBI" id="CHEBI:60344"/>
        <label>b566</label>
    </ligand>
    <ligandPart>
        <name>Fe</name>
        <dbReference type="ChEBI" id="CHEBI:18248"/>
    </ligandPart>
</feature>
<feature type="binding site" description="axial binding residue" evidence="2">
    <location>
        <position position="182"/>
    </location>
    <ligand>
        <name>heme b</name>
        <dbReference type="ChEBI" id="CHEBI:60344"/>
        <label>b562</label>
    </ligand>
    <ligandPart>
        <name>Fe</name>
        <dbReference type="ChEBI" id="CHEBI:18248"/>
    </ligandPart>
</feature>
<feature type="binding site" description="axial binding residue" evidence="2">
    <location>
        <position position="196"/>
    </location>
    <ligand>
        <name>heme b</name>
        <dbReference type="ChEBI" id="CHEBI:60344"/>
        <label>b566</label>
    </ligand>
    <ligandPart>
        <name>Fe</name>
        <dbReference type="ChEBI" id="CHEBI:18248"/>
    </ligandPart>
</feature>
<feature type="binding site" evidence="2">
    <location>
        <position position="201"/>
    </location>
    <ligand>
        <name>a ubiquinone</name>
        <dbReference type="ChEBI" id="CHEBI:16389"/>
    </ligand>
</feature>
<feature type="sequence conflict" description="In Ref. 2; BAA12251." evidence="5" ref="2">
    <original>A</original>
    <variation>G</variation>
    <location>
        <position position="191"/>
    </location>
</feature>
<feature type="sequence conflict" description="In Ref. 2; BAA12251." evidence="5" ref="2">
    <original>T</original>
    <variation>I</variation>
    <location>
        <position position="257"/>
    </location>
</feature>
<feature type="sequence conflict" description="In Ref. 2; BAA12251." evidence="5" ref="2">
    <original>V</original>
    <variation>A</variation>
    <location>
        <position position="368"/>
    </location>
</feature>
<organism>
    <name type="scientific">Capra hircus</name>
    <name type="common">Goat</name>
    <dbReference type="NCBI Taxonomy" id="9925"/>
    <lineage>
        <taxon>Eukaryota</taxon>
        <taxon>Metazoa</taxon>
        <taxon>Chordata</taxon>
        <taxon>Craniata</taxon>
        <taxon>Vertebrata</taxon>
        <taxon>Euteleostomi</taxon>
        <taxon>Mammalia</taxon>
        <taxon>Eutheria</taxon>
        <taxon>Laurasiatheria</taxon>
        <taxon>Artiodactyla</taxon>
        <taxon>Ruminantia</taxon>
        <taxon>Pecora</taxon>
        <taxon>Bovidae</taxon>
        <taxon>Caprinae</taxon>
        <taxon>Capra</taxon>
    </lineage>
</organism>
<reference key="1">
    <citation type="journal article" date="1991" name="J. Mol. Evol.">
        <title>Evolution of the cytochrome b gene of mammals.</title>
        <authorList>
            <person name="Irwin D.M."/>
            <person name="Kocher T.D."/>
            <person name="Wilson A.C."/>
        </authorList>
    </citation>
    <scope>NUCLEOTIDE SEQUENCE [GENOMIC DNA]</scope>
</reference>
<reference key="2">
    <citation type="submission" date="1996-04" db="EMBL/GenBank/DDBJ databases">
        <authorList>
            <person name="Arai K."/>
            <person name="Munechika I."/>
            <person name="Ito I."/>
            <person name="Kikkawa A."/>
            <person name="Kanazawa T."/>
            <person name="Kosugiyama M."/>
        </authorList>
    </citation>
    <scope>NUCLEOTIDE SEQUENCE [GENOMIC DNA]</scope>
    <source>
        <tissue>Blood</tissue>
    </source>
</reference>
<accession>P24953</accession>
<accession>Q34114</accession>
<comment type="function">
    <text evidence="2">Component of the ubiquinol-cytochrome c reductase complex (complex III or cytochrome b-c1 complex) that is part of the mitochondrial respiratory chain. The b-c1 complex mediates electron transfer from ubiquinol to cytochrome c. Contributes to the generation of a proton gradient across the mitochondrial membrane that is then used for ATP synthesis.</text>
</comment>
<comment type="cofactor">
    <cofactor evidence="2">
        <name>heme b</name>
        <dbReference type="ChEBI" id="CHEBI:60344"/>
    </cofactor>
    <text evidence="2">Binds 2 heme b groups non-covalently.</text>
</comment>
<comment type="subunit">
    <text evidence="2">The cytochrome bc1 complex contains 11 subunits: 3 respiratory subunits (MT-CYB, CYC1 and UQCRFS1), 2 core proteins (UQCRC1 and UQCRC2) and 6 low-molecular weight proteins (UQCRH/QCR6, UQCRB/QCR7, UQCRQ/QCR8, UQCR10/QCR9, UQCR11/QCR10 and a cleavage product of UQCRFS1). This cytochrome bc1 complex then forms a dimer.</text>
</comment>
<comment type="subcellular location">
    <subcellularLocation>
        <location evidence="2">Mitochondrion inner membrane</location>
        <topology evidence="2">Multi-pass membrane protein</topology>
    </subcellularLocation>
</comment>
<comment type="miscellaneous">
    <text evidence="1">Heme 1 (or BL or b562) is low-potential and absorbs at about 562 nm, and heme 2 (or BH or b566) is high-potential and absorbs at about 566 nm.</text>
</comment>
<comment type="similarity">
    <text evidence="3 4">Belongs to the cytochrome b family.</text>
</comment>
<comment type="caution">
    <text evidence="2">The full-length protein contains only eight transmembrane helices, not nine as predicted by bioinformatics tools.</text>
</comment>